<reference key="1">
    <citation type="journal article" date="1987" name="EMBO J.">
        <title>Study of a growth hormone-regulated protein secreted by rat hepatocytes: cDNA cloning, anti-protease activity and regulation of its synthesis by various hormones.</title>
        <authorList>
            <person name="le Cam A."/>
            <person name="Pages G."/>
            <person name="Auberger P."/>
            <person name="le Cam G."/>
            <person name="Leopold P."/>
            <person name="Benarous R."/>
            <person name="Glaichenhaus N."/>
        </authorList>
    </citation>
    <scope>NUCLEOTIDE SEQUENCE [MRNA]</scope>
    <scope>FUNCTION</scope>
    <scope>TISSUE SPECIFICITY</scope>
    <scope>INDUCTION</scope>
    <scope>GLYCOSYLATION</scope>
</reference>
<reference key="2">
    <citation type="submission" date="1987-10" db="EMBL/GenBank/DDBJ databases">
        <authorList>
            <person name="le Cam A."/>
        </authorList>
    </citation>
    <scope>SEQUENCE REVISION</scope>
</reference>
<reference key="3">
    <citation type="journal article" date="1987" name="J. Biol. Chem.">
        <title>Growth hormone induces two mRNA species of the serine protease inhibitor gene family in rat liver.</title>
        <authorList>
            <person name="Yoon J.-B."/>
            <person name="Towle H.C."/>
            <person name="Seelig S."/>
        </authorList>
    </citation>
    <scope>NUCLEOTIDE SEQUENCE [MRNA]</scope>
    <scope>INDUCTION</scope>
    <source>
        <tissue>Liver</tissue>
    </source>
</reference>
<reference key="4">
    <citation type="journal article" date="1990" name="Eur. J. Biochem.">
        <title>Molecular characterization of three rat liver serine-protease inhibitors affected by inflammation and hypophysectomy. Protein and mRNA analysis and cDNA cloning.</title>
        <authorList>
            <person name="Pages G."/>
            <person name="Rouayrenc J.F."/>
            <person name="le Cam G."/>
            <person name="Mariller M."/>
            <person name="le Cam A."/>
        </authorList>
    </citation>
    <scope>NUCLEOTIDE SEQUENCE [MRNA]</scope>
    <scope>INDUCTION</scope>
    <scope>GLYCOSYLATION</scope>
    <source>
        <tissue>Liver</tissue>
    </source>
</reference>
<reference key="5">
    <citation type="journal article" date="1990" name="Gene">
        <title>Primary structure and assignment to chromosome 6 of three related rat genes encoding liver serine protease inhibitors.</title>
        <authorList>
            <person name="Pages G."/>
            <person name="Rouayrenc J.F."/>
            <person name="Rossi V."/>
            <person name="Le Cam G."/>
            <person name="Mariller M."/>
            <person name="Szpirer J."/>
            <person name="Szpirer C."/>
            <person name="Levan G."/>
            <person name="Le Cam A."/>
        </authorList>
    </citation>
    <scope>NUCLEOTIDE SEQUENCE [GENOMIC DNA]</scope>
    <scope>VARIANT ASP-326</scope>
</reference>
<reference key="6">
    <citation type="journal article" date="1991" name="J. Biochem.">
        <title>Molecular cloning and characterization of rat contrapsin-like protease inhibitor and related proteins.</title>
        <authorList>
            <person name="Ohkubo K."/>
            <person name="Ogata S."/>
            <person name="Misumi Y."/>
            <person name="Takami N."/>
            <person name="Ikehara Y."/>
        </authorList>
    </citation>
    <scope>NUCLEOTIDE SEQUENCE [MRNA]</scope>
    <scope>PARTIAL PROTEIN SEQUENCE</scope>
    <scope>FUNCTION</scope>
    <scope>TISSUE SPECIFICITY</scope>
    <source>
        <tissue>Liver</tissue>
    </source>
</reference>
<reference key="7">
    <citation type="journal article" date="1991" name="J. Biol. Chem.">
        <title>Molecular cloning and analysis of the rat kallikrein-binding protein gene.</title>
        <authorList>
            <person name="Chai K.X."/>
            <person name="Ma J.-X."/>
            <person name="Murray S.R."/>
            <person name="Chao J."/>
            <person name="Chao L."/>
        </authorList>
    </citation>
    <scope>NUCLEOTIDE SEQUENCE [GENOMIC DNA]</scope>
    <source>
        <strain>Sprague-Dawley</strain>
        <tissue>Liver</tissue>
    </source>
</reference>
<reference key="8">
    <citation type="journal article" date="2004" name="Genome Res.">
        <title>The status, quality, and expansion of the NIH full-length cDNA project: the Mammalian Gene Collection (MGC).</title>
        <authorList>
            <consortium name="The MGC Project Team"/>
        </authorList>
    </citation>
    <scope>NUCLEOTIDE SEQUENCE [LARGE SCALE MRNA]</scope>
    <source>
        <tissue>Pituitary</tissue>
    </source>
</reference>
<reference key="9">
    <citation type="journal article" date="1990" name="J. Biol. Chem.">
        <title>Tissue kallikrein-binding protein is a serpin. I. Purification, characterization, and distribution in normotensive and spontaneously hypertensive rats.</title>
        <authorList>
            <person name="Chao J."/>
            <person name="Chai K.X."/>
            <person name="Chen L.-M."/>
            <person name="Xiong W."/>
            <person name="Chao S."/>
            <person name="Woodley-Miller C."/>
            <person name="Wang L."/>
            <person name="Lu H.S."/>
            <person name="Chao L."/>
        </authorList>
    </citation>
    <scope>NUCLEOTIDE SEQUENCE [MRNA] OF 1-49</scope>
    <scope>PROTEIN SEQUENCE OF 21-49</scope>
    <scope>CHARACTERIZATION</scope>
    <scope>TISSUE SPECIFICITY</scope>
    <scope>INDUCTION</scope>
</reference>
<reference key="10">
    <citation type="submission" date="2007-09" db="UniProtKB">
        <authorList>
            <person name="Lubec G."/>
            <person name="Afjehi-Sadat L."/>
            <person name="Kang S.U."/>
            <person name="Lubec S."/>
        </authorList>
    </citation>
    <scope>PROTEIN SEQUENCE OF 155-167; 188-210 AND 312-330</scope>
    <scope>IDENTIFICATION BY MASS SPECTROMETRY</scope>
    <source>
        <strain>Sprague-Dawley</strain>
        <tissue>Brain</tissue>
        <tissue>Spinal cord</tissue>
    </source>
</reference>
<reference key="11">
    <citation type="journal article" date="2004" name="J. Mol. Evol.">
        <title>Expression patterns of murine antichymotrypsin-like genes reflect evolutionary divergence at the Serpina3 locus.</title>
        <authorList>
            <person name="Horvath A.J."/>
            <person name="Forsyth S.L."/>
            <person name="Coughlin P.B."/>
        </authorList>
    </citation>
    <scope>DOMAIN RCL</scope>
</reference>
<name>SPA3K_RAT</name>
<accession>P05545</accession>
<accession>P14281</accession>
<accession>Q64254</accession>
<accession>Q6P6G8</accession>
<comment type="function">
    <text evidence="5 8">Binds to and inhibits kallikreins. Inhibits trypsin but not chymotrypsin or elastase.</text>
</comment>
<comment type="subcellular location">
    <subcellularLocation>
        <location evidence="1">Secreted</location>
    </subcellularLocation>
</comment>
<comment type="tissue specificity">
    <text evidence="5 7 8">Liver and plasma.</text>
</comment>
<comment type="induction">
    <text evidence="4 7 8 9">By growth hormone, thyroid hormone and sex hormones. Its expression is reduced by inflammation. In male rats, its level is several fold higher than in female rats. Reduced during acute inflammation.</text>
</comment>
<comment type="domain">
    <text evidence="1 3">The reactive center loop (RCL) extends out from the body of the protein and directs binding to the target protease. The protease cleaves the serpin at the reactive site within the RCL, establishing a covalent linkage between the serpin reactive site and the protease. The resulting inactive serpin-protease complex is highly stable (By similarity). Variability within the reactive center loop (RCL) sequences of Serpina3 paralogs may determine target protease specificity.</text>
</comment>
<comment type="PTM">
    <text evidence="4 8">N-glycosylated.</text>
</comment>
<comment type="miscellaneous">
    <text>The single human alpha1-antichymotrypsin gene (SERPINA3) is represented by a cluster of 6 individual rat paralogs.</text>
</comment>
<comment type="similarity">
    <text evidence="10">Belongs to the serpin family.</text>
</comment>
<comment type="sequence caution" evidence="10">
    <conflict type="erroneous initiation">
        <sequence resource="EMBL-CDS" id="AAH62236"/>
    </conflict>
</comment>
<comment type="sequence caution" evidence="10">
    <conflict type="erroneous initiation">
        <sequence resource="EMBL-CDS" id="CAA34407"/>
    </conflict>
</comment>
<comment type="sequence caution" evidence="10">
    <conflict type="erroneous initiation">
        <sequence resource="EMBL-CDS" id="CAA34409"/>
    </conflict>
</comment>
<feature type="signal peptide" evidence="7">
    <location>
        <begin position="1"/>
        <end position="20"/>
    </location>
</feature>
<feature type="chain" id="PRO_0000032421" description="Serine protease inhibitor A3K">
    <location>
        <begin position="21"/>
        <end position="416"/>
    </location>
</feature>
<feature type="region of interest" description="RCL">
    <location>
        <begin position="365"/>
        <end position="392"/>
    </location>
</feature>
<feature type="site" description="Reactive bond" evidence="1">
    <location>
        <begin position="379"/>
        <end position="380"/>
    </location>
</feature>
<feature type="glycosylation site" description="N-linked (GlcNAc...) asparagine" evidence="2">
    <location>
        <position position="102"/>
    </location>
</feature>
<feature type="glycosylation site" description="N-linked (GlcNAc...) asparagine" evidence="2">
    <location>
        <position position="182"/>
    </location>
</feature>
<feature type="glycosylation site" description="N-linked (GlcNAc...) asparagine" evidence="2">
    <location>
        <position position="220"/>
    </location>
</feature>
<feature type="glycosylation site" description="N-linked (GlcNAc...) asparagine" evidence="2">
    <location>
        <position position="267"/>
    </location>
</feature>
<feature type="sequence variant" evidence="6">
    <original>E</original>
    <variation>D</variation>
    <location>
        <position position="326"/>
    </location>
</feature>
<feature type="sequence conflict" description="In Ref. 9; AA sequence." evidence="10" ref="9">
    <original>P</original>
    <variation>S</variation>
    <location>
        <position position="30"/>
    </location>
</feature>
<feature type="sequence conflict" description="In Ref. 9; AA sequence." evidence="10" ref="9">
    <original>S</original>
    <variation>A</variation>
    <location>
        <position position="47"/>
    </location>
</feature>
<feature type="sequence conflict" description="In Ref. 3; AAA42173, 6; BAA00648 and 8; AAH62236." evidence="10" ref="3 6 8">
    <original>V</original>
    <variation>G</variation>
    <location>
        <position position="98"/>
    </location>
</feature>
<feature type="sequence conflict" description="In Ref. 4; CAA34407." evidence="10" ref="4">
    <original>H</original>
    <variation>HH</variation>
    <location>
        <position position="112"/>
    </location>
</feature>
<feature type="sequence conflict" description="In Ref. 6; BAA00648." evidence="10" ref="6">
    <original>E</original>
    <variation>D</variation>
    <location>
        <position position="194"/>
    </location>
</feature>
<feature type="sequence conflict" description="In Ref. 6; BAA00648." evidence="10" ref="6">
    <original>I</original>
    <variation>V</variation>
    <location>
        <position position="250"/>
    </location>
</feature>
<feature type="sequence conflict" description="In Ref. 5; CAA34409." evidence="10" ref="5">
    <original>E</original>
    <variation>D</variation>
    <location>
        <position position="326"/>
    </location>
</feature>
<feature type="sequence conflict" description="In Ref. 6; BAA00648." evidence="10" ref="6">
    <original>I</original>
    <variation>V</variation>
    <location>
        <position position="385"/>
    </location>
</feature>
<feature type="sequence conflict" description="In Ref. 4; CAA34407." evidence="10" ref="4">
    <original>L</original>
    <variation>P</variation>
    <location>
        <position position="387"/>
    </location>
</feature>
<feature type="sequence conflict" description="In Ref. 8; AAH62236." evidence="10" ref="8">
    <original>N</original>
    <variation>D</variation>
    <location>
        <position position="401"/>
    </location>
</feature>
<gene>
    <name type="primary">Serpina3k</name>
    <name type="synonym">Spin2b</name>
</gene>
<protein>
    <recommendedName>
        <fullName>Serine protease inhibitor A3K</fullName>
        <shortName>Serpin A3K</shortName>
    </recommendedName>
    <alternativeName>
        <fullName>CPI-21</fullName>
    </alternativeName>
    <alternativeName>
        <fullName>Contrapsin-like protease inhibitor 1</fullName>
    </alternativeName>
    <alternativeName>
        <fullName>GHR-P63</fullName>
    </alternativeName>
    <alternativeName>
        <fullName>Growth hormone-regulated proteinase inhibitor</fullName>
    </alternativeName>
    <alternativeName>
        <fullName>Kallikrein-binding protein</fullName>
        <shortName>KBP</shortName>
    </alternativeName>
    <alternativeName>
        <fullName>SPI-2.3</fullName>
    </alternativeName>
    <alternativeName>
        <fullName>Serine protease inhibitor 2</fullName>
        <shortName>SPI-2</shortName>
    </alternativeName>
    <alternativeName>
        <fullName>Thyroid hormone-regulated protein</fullName>
    </alternativeName>
</protein>
<organism>
    <name type="scientific">Rattus norvegicus</name>
    <name type="common">Rat</name>
    <dbReference type="NCBI Taxonomy" id="10116"/>
    <lineage>
        <taxon>Eukaryota</taxon>
        <taxon>Metazoa</taxon>
        <taxon>Chordata</taxon>
        <taxon>Craniata</taxon>
        <taxon>Vertebrata</taxon>
        <taxon>Euteleostomi</taxon>
        <taxon>Mammalia</taxon>
        <taxon>Eutheria</taxon>
        <taxon>Euarchontoglires</taxon>
        <taxon>Glires</taxon>
        <taxon>Rodentia</taxon>
        <taxon>Myomorpha</taxon>
        <taxon>Muroidea</taxon>
        <taxon>Muridae</taxon>
        <taxon>Murinae</taxon>
        <taxon>Rattus</taxon>
    </lineage>
</organism>
<sequence length="416" mass="46562">MAFIAALGLLMAGICPAVLCDGILGRDTLPHEDQGKGRQLHSLTLASINTDFTLSLYKKLALRNPDKNVVFSPLSISAALAILSLGAKDSTMEEILEVLKFNLTEITEEEIHQGFGHLLQRLSQPEDQAEINTGSALFIDKEQPILSEFQEKTRALYQAEAFVADFKQCNEAKKFINDYVSNQTQGKIAELFSELDERTSMVLVNYLLFKGKWKVPFNPNDTFESEFYLDEKRSVKVPMMKIKDLTTPYIRDEELSCSVLELKYTGNASALFILPDQGKMQQVESSLQPETLKKWKDSLRPRIISELRMPKFSISTDYNLEEVLPELGIRKIFSQQADLSRITGTKNLHVSQVVHKAVLDVDETGTEGAAATAVTAALKSLPQTIPLLNFNRPFMLVITDNNGQSVFFMGKVTNPM</sequence>
<evidence type="ECO:0000250" key="1"/>
<evidence type="ECO:0000255" key="2"/>
<evidence type="ECO:0000269" key="3">
    <source>
    </source>
</evidence>
<evidence type="ECO:0000269" key="4">
    <source>
    </source>
</evidence>
<evidence type="ECO:0000269" key="5">
    <source>
    </source>
</evidence>
<evidence type="ECO:0000269" key="6">
    <source>
    </source>
</evidence>
<evidence type="ECO:0000269" key="7">
    <source>
    </source>
</evidence>
<evidence type="ECO:0000269" key="8">
    <source>
    </source>
</evidence>
<evidence type="ECO:0000269" key="9">
    <source>
    </source>
</evidence>
<evidence type="ECO:0000305" key="10"/>
<keyword id="KW-0903">Direct protein sequencing</keyword>
<keyword id="KW-0325">Glycoprotein</keyword>
<keyword id="KW-0646">Protease inhibitor</keyword>
<keyword id="KW-1185">Reference proteome</keyword>
<keyword id="KW-0964">Secreted</keyword>
<keyword id="KW-0722">Serine protease inhibitor</keyword>
<keyword id="KW-0732">Signal</keyword>
<dbReference type="EMBL" id="X05348">
    <property type="protein sequence ID" value="CAA28958.1"/>
    <property type="molecule type" value="mRNA"/>
</dbReference>
<dbReference type="EMBL" id="M15916">
    <property type="protein sequence ID" value="AAA42173.1"/>
    <property type="molecule type" value="mRNA"/>
</dbReference>
<dbReference type="EMBL" id="X16358">
    <property type="protein sequence ID" value="CAA34407.1"/>
    <property type="status" value="ALT_INIT"/>
    <property type="molecule type" value="mRNA"/>
</dbReference>
<dbReference type="EMBL" id="X16362">
    <property type="protein sequence ID" value="CAA34409.1"/>
    <property type="status" value="ALT_INIT"/>
    <property type="molecule type" value="Genomic_DNA"/>
</dbReference>
<dbReference type="EMBL" id="D00751">
    <property type="protein sequence ID" value="BAA00648.1"/>
    <property type="molecule type" value="mRNA"/>
</dbReference>
<dbReference type="EMBL" id="M67496">
    <property type="status" value="NOT_ANNOTATED_CDS"/>
    <property type="molecule type" value="Genomic_DNA"/>
</dbReference>
<dbReference type="EMBL" id="BC062236">
    <property type="protein sequence ID" value="AAH62236.2"/>
    <property type="status" value="ALT_INIT"/>
    <property type="molecule type" value="mRNA"/>
</dbReference>
<dbReference type="PIR" id="A29035">
    <property type="entry name" value="A29035"/>
</dbReference>
<dbReference type="PIR" id="B29131">
    <property type="entry name" value="B29131"/>
</dbReference>
<dbReference type="SMR" id="P05545"/>
<dbReference type="BioGRID" id="246917">
    <property type="interactions" value="1"/>
</dbReference>
<dbReference type="FunCoup" id="P05545">
    <property type="interactions" value="131"/>
</dbReference>
<dbReference type="IntAct" id="P05545">
    <property type="interactions" value="2"/>
</dbReference>
<dbReference type="STRING" id="10116.ENSRNOP00000013896"/>
<dbReference type="MEROPS" id="I04.051"/>
<dbReference type="GlyCosmos" id="P05545">
    <property type="glycosylation" value="4 sites, No reported glycans"/>
</dbReference>
<dbReference type="GlyGen" id="P05545">
    <property type="glycosylation" value="5 sites"/>
</dbReference>
<dbReference type="iPTMnet" id="P05545"/>
<dbReference type="PhosphoSitePlus" id="P05545"/>
<dbReference type="SwissPalm" id="P05545"/>
<dbReference type="PaxDb" id="10116-ENSRNOP00000013896"/>
<dbReference type="GeneID" id="24794"/>
<dbReference type="KEGG" id="rno:24794"/>
<dbReference type="UCSC" id="RGD:3746">
    <property type="organism name" value="rat"/>
</dbReference>
<dbReference type="AGR" id="RGD:2972"/>
<dbReference type="CTD" id="16625"/>
<dbReference type="RGD" id="3746">
    <property type="gene designation" value="Serpina3k"/>
</dbReference>
<dbReference type="eggNOG" id="KOG2392">
    <property type="taxonomic scope" value="Eukaryota"/>
</dbReference>
<dbReference type="InParanoid" id="P05545"/>
<dbReference type="OrthoDB" id="671595at2759"/>
<dbReference type="PhylomeDB" id="P05545"/>
<dbReference type="TreeFam" id="TF343201"/>
<dbReference type="PRO" id="PR:P05545"/>
<dbReference type="Proteomes" id="UP000002494">
    <property type="component" value="Unplaced"/>
</dbReference>
<dbReference type="GO" id="GO:0005615">
    <property type="term" value="C:extracellular space"/>
    <property type="evidence" value="ECO:0000318"/>
    <property type="project" value="GO_Central"/>
</dbReference>
<dbReference type="GO" id="GO:0004867">
    <property type="term" value="F:serine-type endopeptidase inhibitor activity"/>
    <property type="evidence" value="ECO:0000318"/>
    <property type="project" value="GO_Central"/>
</dbReference>
<dbReference type="GO" id="GO:0034097">
    <property type="term" value="P:response to cytokine"/>
    <property type="evidence" value="ECO:0000318"/>
    <property type="project" value="GO_Central"/>
</dbReference>
<dbReference type="CDD" id="cd19551">
    <property type="entry name" value="serpinA3_A1AC"/>
    <property type="match status" value="1"/>
</dbReference>
<dbReference type="FunFam" id="3.30.497.10:FF:000001">
    <property type="entry name" value="Serine protease inhibitor"/>
    <property type="match status" value="1"/>
</dbReference>
<dbReference type="FunFam" id="2.30.39.10:FF:000002">
    <property type="entry name" value="Serpin family D member 1"/>
    <property type="match status" value="1"/>
</dbReference>
<dbReference type="Gene3D" id="2.30.39.10">
    <property type="entry name" value="Alpha-1-antitrypsin, domain 1"/>
    <property type="match status" value="1"/>
</dbReference>
<dbReference type="Gene3D" id="3.30.497.10">
    <property type="entry name" value="Antithrombin, subunit I, domain 2"/>
    <property type="match status" value="1"/>
</dbReference>
<dbReference type="InterPro" id="IPR023795">
    <property type="entry name" value="Serpin_CS"/>
</dbReference>
<dbReference type="InterPro" id="IPR023796">
    <property type="entry name" value="Serpin_dom"/>
</dbReference>
<dbReference type="InterPro" id="IPR000215">
    <property type="entry name" value="Serpin_fam"/>
</dbReference>
<dbReference type="InterPro" id="IPR036186">
    <property type="entry name" value="Serpin_sf"/>
</dbReference>
<dbReference type="InterPro" id="IPR042178">
    <property type="entry name" value="Serpin_sf_1"/>
</dbReference>
<dbReference type="InterPro" id="IPR042185">
    <property type="entry name" value="Serpin_sf_2"/>
</dbReference>
<dbReference type="PANTHER" id="PTHR11461:SF195">
    <property type="entry name" value="SERINE PROTEASE INHIBITOR A3A-RELATED"/>
    <property type="match status" value="1"/>
</dbReference>
<dbReference type="PANTHER" id="PTHR11461">
    <property type="entry name" value="SERINE PROTEASE INHIBITOR, SERPIN"/>
    <property type="match status" value="1"/>
</dbReference>
<dbReference type="Pfam" id="PF00079">
    <property type="entry name" value="Serpin"/>
    <property type="match status" value="1"/>
</dbReference>
<dbReference type="SMART" id="SM00093">
    <property type="entry name" value="SERPIN"/>
    <property type="match status" value="1"/>
</dbReference>
<dbReference type="SUPFAM" id="SSF56574">
    <property type="entry name" value="Serpins"/>
    <property type="match status" value="1"/>
</dbReference>
<dbReference type="PROSITE" id="PS00284">
    <property type="entry name" value="SERPIN"/>
    <property type="match status" value="1"/>
</dbReference>
<proteinExistence type="evidence at protein level"/>